<reference key="1">
    <citation type="journal article" date="1988" name="J. Bacteriol.">
        <title>Structure and organization of the pel genes from Erwinia chrysanthemi EC16.</title>
        <authorList>
            <person name="Tamaki S.J."/>
            <person name="Gold S."/>
            <person name="Robeson M."/>
            <person name="Manulis S."/>
            <person name="Keen N.T."/>
        </authorList>
    </citation>
    <scope>NUCLEOTIDE SEQUENCE [GENOMIC DNA]</scope>
    <source>
        <strain>EC16</strain>
    </source>
</reference>
<reference key="2">
    <citation type="journal article" date="1993" name="Science">
        <title>New domain motif: the structure of pectate lyase C, a secreted plant virulence factor.</title>
        <authorList>
            <person name="Yoder M.D."/>
            <person name="Keen N.T."/>
            <person name="Jurnak F."/>
        </authorList>
    </citation>
    <scope>X-RAY CRYSTALLOGRAPHY (2.2 ANGSTROMS) OF 23-375</scope>
</reference>
<reference key="3">
    <citation type="journal article" date="1996" name="Plant Physiol.">
        <title>The refined three-dimensional structure of pectate lyase E from Erwinia chrysanthemi at 2.2-A resolution.</title>
        <authorList>
            <person name="Lietzke S.E."/>
            <person name="Scavetta R.D."/>
            <person name="Yoder M.D."/>
            <person name="Jurnak F.A."/>
        </authorList>
    </citation>
    <scope>X-RAY CRYSTALLOGRAPHY (2.2 ANGSTROMS) OF 23-375</scope>
</reference>
<reference key="4">
    <citation type="journal article" date="2003" name="J. Biol. Chem.">
        <title>Characterization and implications of Ca2+ binding to pectate lyase C.</title>
        <authorList>
            <person name="Herron S.R."/>
            <person name="Scavetta R.D."/>
            <person name="Garrett M."/>
            <person name="Legner M."/>
            <person name="Jurnak F."/>
        </authorList>
    </citation>
    <scope>X-RAY CRYSTALLOGRAPHY (2.2 ANGSTROMS) OF 23-375 IN COMPLEX WITH CALCIUM</scope>
    <scope>COFACTOR</scope>
</reference>
<gene>
    <name evidence="3" type="primary">pelC</name>
</gene>
<dbReference type="EC" id="4.2.2.2"/>
<dbReference type="EMBL" id="M19411">
    <property type="protein sequence ID" value="AAA24849.1"/>
    <property type="molecule type" value="Genomic_DNA"/>
</dbReference>
<dbReference type="PIR" id="A31091">
    <property type="entry name" value="WZWC6C"/>
</dbReference>
<dbReference type="RefSeq" id="WP_039999250.1">
    <property type="nucleotide sequence ID" value="NZ_JAFCAF010000023.1"/>
</dbReference>
<dbReference type="PDB" id="1AIR">
    <property type="method" value="X-ray"/>
    <property type="resolution" value="2.20 A"/>
    <property type="chains" value="A=23-375"/>
</dbReference>
<dbReference type="PDB" id="1O88">
    <property type="method" value="X-ray"/>
    <property type="resolution" value="2.20 A"/>
    <property type="chains" value="A=23-375"/>
</dbReference>
<dbReference type="PDB" id="1O8D">
    <property type="method" value="X-ray"/>
    <property type="resolution" value="2.20 A"/>
    <property type="chains" value="A=23-375"/>
</dbReference>
<dbReference type="PDB" id="1O8E">
    <property type="method" value="X-ray"/>
    <property type="resolution" value="2.20 A"/>
    <property type="chains" value="A=23-375"/>
</dbReference>
<dbReference type="PDB" id="1O8F">
    <property type="method" value="X-ray"/>
    <property type="resolution" value="2.20 A"/>
    <property type="chains" value="A=23-375"/>
</dbReference>
<dbReference type="PDB" id="1O8G">
    <property type="method" value="X-ray"/>
    <property type="resolution" value="2.20 A"/>
    <property type="chains" value="A=23-375"/>
</dbReference>
<dbReference type="PDB" id="1O8H">
    <property type="method" value="X-ray"/>
    <property type="resolution" value="2.20 A"/>
    <property type="chains" value="A=23-375"/>
</dbReference>
<dbReference type="PDB" id="1O8I">
    <property type="method" value="X-ray"/>
    <property type="resolution" value="2.20 A"/>
    <property type="chains" value="A=23-375"/>
</dbReference>
<dbReference type="PDB" id="1O8J">
    <property type="method" value="X-ray"/>
    <property type="resolution" value="2.20 A"/>
    <property type="chains" value="A=23-375"/>
</dbReference>
<dbReference type="PDB" id="1O8K">
    <property type="method" value="X-ray"/>
    <property type="resolution" value="2.20 A"/>
    <property type="chains" value="A=23-375"/>
</dbReference>
<dbReference type="PDB" id="1O8L">
    <property type="method" value="X-ray"/>
    <property type="resolution" value="2.20 A"/>
    <property type="chains" value="A=23-375"/>
</dbReference>
<dbReference type="PDB" id="1O8M">
    <property type="method" value="X-ray"/>
    <property type="resolution" value="2.20 A"/>
    <property type="chains" value="A=23-375"/>
</dbReference>
<dbReference type="PDB" id="1PLU">
    <property type="method" value="X-ray"/>
    <property type="resolution" value="2.20 A"/>
    <property type="chains" value="A=23-375"/>
</dbReference>
<dbReference type="PDB" id="2EWE">
    <property type="method" value="X-ray"/>
    <property type="resolution" value="2.20 A"/>
    <property type="chains" value="A=23-375"/>
</dbReference>
<dbReference type="PDB" id="2PEC">
    <property type="method" value="X-ray"/>
    <property type="resolution" value="2.20 A"/>
    <property type="chains" value="A=23-375"/>
</dbReference>
<dbReference type="PDBsum" id="1AIR"/>
<dbReference type="PDBsum" id="1O88"/>
<dbReference type="PDBsum" id="1O8D"/>
<dbReference type="PDBsum" id="1O8E"/>
<dbReference type="PDBsum" id="1O8F"/>
<dbReference type="PDBsum" id="1O8G"/>
<dbReference type="PDBsum" id="1O8H"/>
<dbReference type="PDBsum" id="1O8I"/>
<dbReference type="PDBsum" id="1O8J"/>
<dbReference type="PDBsum" id="1O8K"/>
<dbReference type="PDBsum" id="1O8L"/>
<dbReference type="PDBsum" id="1O8M"/>
<dbReference type="PDBsum" id="1PLU"/>
<dbReference type="PDBsum" id="2EWE"/>
<dbReference type="PDBsum" id="2PEC"/>
<dbReference type="PCDDB" id="P11073"/>
<dbReference type="SMR" id="P11073"/>
<dbReference type="CAZy" id="PL1">
    <property type="family name" value="Polysaccharide Lyase Family 1"/>
</dbReference>
<dbReference type="BRENDA" id="4.2.2.2">
    <property type="organism ID" value="2141"/>
</dbReference>
<dbReference type="UniPathway" id="UPA00545">
    <property type="reaction ID" value="UER00824"/>
</dbReference>
<dbReference type="EvolutionaryTrace" id="P11073"/>
<dbReference type="GO" id="GO:0005576">
    <property type="term" value="C:extracellular region"/>
    <property type="evidence" value="ECO:0007669"/>
    <property type="project" value="UniProtKB-SubCell"/>
</dbReference>
<dbReference type="GO" id="GO:0046872">
    <property type="term" value="F:metal ion binding"/>
    <property type="evidence" value="ECO:0007669"/>
    <property type="project" value="UniProtKB-KW"/>
</dbReference>
<dbReference type="GO" id="GO:0030570">
    <property type="term" value="F:pectate lyase activity"/>
    <property type="evidence" value="ECO:0007669"/>
    <property type="project" value="UniProtKB-EC"/>
</dbReference>
<dbReference type="GO" id="GO:0045490">
    <property type="term" value="P:pectin catabolic process"/>
    <property type="evidence" value="ECO:0007669"/>
    <property type="project" value="UniProtKB-UniPathway"/>
</dbReference>
<dbReference type="Gene3D" id="2.160.20.10">
    <property type="entry name" value="Single-stranded right-handed beta-helix, Pectin lyase-like"/>
    <property type="match status" value="1"/>
</dbReference>
<dbReference type="InterPro" id="IPR002022">
    <property type="entry name" value="Pec_lyase"/>
</dbReference>
<dbReference type="InterPro" id="IPR012334">
    <property type="entry name" value="Pectin_lyas_fold"/>
</dbReference>
<dbReference type="InterPro" id="IPR011050">
    <property type="entry name" value="Pectin_lyase_fold/virulence"/>
</dbReference>
<dbReference type="InterPro" id="IPR045032">
    <property type="entry name" value="PEL"/>
</dbReference>
<dbReference type="PANTHER" id="PTHR31683">
    <property type="entry name" value="PECTATE LYASE 18-RELATED"/>
    <property type="match status" value="1"/>
</dbReference>
<dbReference type="PANTHER" id="PTHR31683:SF18">
    <property type="entry name" value="PECTATE LYASE 21-RELATED"/>
    <property type="match status" value="1"/>
</dbReference>
<dbReference type="Pfam" id="PF00544">
    <property type="entry name" value="Pectate_lyase_4"/>
    <property type="match status" value="1"/>
</dbReference>
<dbReference type="SMART" id="SM00656">
    <property type="entry name" value="Amb_all"/>
    <property type="match status" value="1"/>
</dbReference>
<dbReference type="SUPFAM" id="SSF51126">
    <property type="entry name" value="Pectin lyase-like"/>
    <property type="match status" value="1"/>
</dbReference>
<comment type="function">
    <text>Involved in maceration and soft-rotting of plant tissue.</text>
</comment>
<comment type="catalytic activity">
    <reaction>
        <text>Eliminative cleavage of (1-&gt;4)-alpha-D-galacturonan to give oligosaccharides with 4-deoxy-alpha-D-galact-4-enuronosyl groups at their non-reducing ends.</text>
        <dbReference type="EC" id="4.2.2.2"/>
    </reaction>
</comment>
<comment type="cofactor">
    <cofactor evidence="2">
        <name>Ca(2+)</name>
        <dbReference type="ChEBI" id="CHEBI:29108"/>
    </cofactor>
    <text evidence="2">Binds 1 Ca(2+) ion per subunit.</text>
</comment>
<comment type="pathway">
    <text>Glycan metabolism; pectin degradation; 2-dehydro-3-deoxy-D-gluconate from pectin: step 2/5.</text>
</comment>
<comment type="subcellular location">
    <subcellularLocation>
        <location>Secreted</location>
    </subcellularLocation>
</comment>
<comment type="similarity">
    <text evidence="4">Belongs to the polysaccharide lyase 1 family. PLADES subfamily.</text>
</comment>
<sequence>MKSLITPITAGLLLALSQPLLAATDTGGYAATAGGNVTGAVSKTATSMQDIVNIIDAARLDANGKKVKGGAYPLVITYTGNEDSLINAAAANICGQWSKDPRGVEIKEFTKGITIIGANGSSANFGIWIKKSSDVVVQNMRIGYLPGGAKDGDMIRVDDSPNVWVDHNELFAANHECDGTPDNDTTFESAVDIKGASNTVTVSYNYIHGVKKVGLDGSSSSDTGRNITYHHNYYNDVNARLPLQRGGLVHAYNNLYTNITGSGLNVRQNGQALIENNWFEKAINPVTSRYDGKNFGTWVLKGNNITKPADFSTYSITWTADTKPYVNADSWTSTGTFPTVAYNYSPVSAQCVKDKLPGYAGVGKNLATLTSTACK</sequence>
<feature type="signal peptide">
    <location>
        <begin position="1"/>
        <end position="22"/>
    </location>
</feature>
<feature type="chain" id="PRO_0000024854" description="Pectate lyase C">
    <location>
        <begin position="23"/>
        <end position="375"/>
    </location>
</feature>
<feature type="active site" evidence="1">
    <location>
        <position position="240"/>
    </location>
</feature>
<feature type="binding site" evidence="2">
    <location>
        <position position="151"/>
    </location>
    <ligand>
        <name>Ca(2+)</name>
        <dbReference type="ChEBI" id="CHEBI:29108"/>
    </ligand>
</feature>
<feature type="binding site" evidence="2">
    <location>
        <position position="153"/>
    </location>
    <ligand>
        <name>Ca(2+)</name>
        <dbReference type="ChEBI" id="CHEBI:29108"/>
    </ligand>
</feature>
<feature type="binding site" evidence="2">
    <location>
        <position position="188"/>
    </location>
    <ligand>
        <name>Ca(2+)</name>
        <dbReference type="ChEBI" id="CHEBI:29108"/>
    </ligand>
</feature>
<feature type="binding site" evidence="2">
    <location>
        <position position="192"/>
    </location>
    <ligand>
        <name>Ca(2+)</name>
        <dbReference type="ChEBI" id="CHEBI:29108"/>
    </ligand>
</feature>
<feature type="disulfide bond">
    <location>
        <begin position="94"/>
        <end position="177"/>
    </location>
</feature>
<feature type="disulfide bond">
    <location>
        <begin position="351"/>
        <end position="374"/>
    </location>
</feature>
<feature type="strand" evidence="5">
    <location>
        <begin position="27"/>
        <end position="29"/>
    </location>
</feature>
<feature type="strand" evidence="5">
    <location>
        <begin position="41"/>
        <end position="47"/>
    </location>
</feature>
<feature type="helix" evidence="5">
    <location>
        <begin position="48"/>
        <end position="57"/>
    </location>
</feature>
<feature type="strand" evidence="5">
    <location>
        <begin position="74"/>
        <end position="78"/>
    </location>
</feature>
<feature type="helix" evidence="5">
    <location>
        <begin position="83"/>
        <end position="90"/>
    </location>
</feature>
<feature type="helix" evidence="5">
    <location>
        <begin position="93"/>
        <end position="95"/>
    </location>
</feature>
<feature type="turn" evidence="6">
    <location>
        <begin position="96"/>
        <end position="98"/>
    </location>
</feature>
<feature type="strand" evidence="5">
    <location>
        <begin position="103"/>
        <end position="109"/>
    </location>
</feature>
<feature type="strand" evidence="5">
    <location>
        <begin position="113"/>
        <end position="117"/>
    </location>
</feature>
<feature type="strand" evidence="5">
    <location>
        <begin position="123"/>
        <end position="131"/>
    </location>
</feature>
<feature type="strand" evidence="5">
    <location>
        <begin position="134"/>
        <end position="139"/>
    </location>
</feature>
<feature type="strand" evidence="5">
    <location>
        <begin position="141"/>
        <end position="144"/>
    </location>
</feature>
<feature type="helix" evidence="5">
    <location>
        <begin position="148"/>
        <end position="150"/>
    </location>
</feature>
<feature type="strand" evidence="5">
    <location>
        <begin position="154"/>
        <end position="159"/>
    </location>
</feature>
<feature type="strand" evidence="5">
    <location>
        <begin position="162"/>
        <end position="167"/>
    </location>
</feature>
<feature type="strand" evidence="5">
    <location>
        <begin position="169"/>
        <end position="171"/>
    </location>
</feature>
<feature type="helix" evidence="5">
    <location>
        <begin position="181"/>
        <end position="183"/>
    </location>
</feature>
<feature type="strand" evidence="5">
    <location>
        <begin position="190"/>
        <end position="196"/>
    </location>
</feature>
<feature type="strand" evidence="5">
    <location>
        <begin position="199"/>
        <end position="204"/>
    </location>
</feature>
<feature type="strand" evidence="5">
    <location>
        <begin position="206"/>
        <end position="212"/>
    </location>
</feature>
<feature type="strand" evidence="5">
    <location>
        <begin position="215"/>
        <end position="219"/>
    </location>
</feature>
<feature type="strand" evidence="5">
    <location>
        <begin position="226"/>
        <end position="231"/>
    </location>
</feature>
<feature type="strand" evidence="5">
    <location>
        <begin position="233"/>
        <end position="239"/>
    </location>
</feature>
<feature type="strand" evidence="5">
    <location>
        <begin position="243"/>
        <end position="253"/>
    </location>
</feature>
<feature type="strand" evidence="5">
    <location>
        <begin position="255"/>
        <end position="261"/>
    </location>
</feature>
<feature type="strand" evidence="5">
    <location>
        <begin position="263"/>
        <end position="267"/>
    </location>
</feature>
<feature type="strand" evidence="5">
    <location>
        <begin position="271"/>
        <end position="276"/>
    </location>
</feature>
<feature type="strand" evidence="5">
    <location>
        <begin position="278"/>
        <end position="288"/>
    </location>
</feature>
<feature type="strand" evidence="5">
    <location>
        <begin position="290"/>
        <end position="294"/>
    </location>
</feature>
<feature type="strand" evidence="5">
    <location>
        <begin position="297"/>
        <end position="302"/>
    </location>
</feature>
<feature type="helix" evidence="5">
    <location>
        <begin position="310"/>
        <end position="314"/>
    </location>
</feature>
<feature type="helix" evidence="5">
    <location>
        <begin position="349"/>
        <end position="355"/>
    </location>
</feature>
<feature type="helix" evidence="5">
    <location>
        <begin position="356"/>
        <end position="358"/>
    </location>
</feature>
<feature type="strand" evidence="5">
    <location>
        <begin position="360"/>
        <end position="364"/>
    </location>
</feature>
<feature type="helix" evidence="5">
    <location>
        <begin position="371"/>
        <end position="373"/>
    </location>
</feature>
<evidence type="ECO:0000255" key="1"/>
<evidence type="ECO:0000269" key="2">
    <source>
    </source>
</evidence>
<evidence type="ECO:0000303" key="3">
    <source>
    </source>
</evidence>
<evidence type="ECO:0000305" key="4"/>
<evidence type="ECO:0007829" key="5">
    <source>
        <dbReference type="PDB" id="1AIR"/>
    </source>
</evidence>
<evidence type="ECO:0007829" key="6">
    <source>
        <dbReference type="PDB" id="1O8E"/>
    </source>
</evidence>
<keyword id="KW-0002">3D-structure</keyword>
<keyword id="KW-0106">Calcium</keyword>
<keyword id="KW-1015">Disulfide bond</keyword>
<keyword id="KW-0456">Lyase</keyword>
<keyword id="KW-0479">Metal-binding</keyword>
<keyword id="KW-0964">Secreted</keyword>
<keyword id="KW-0732">Signal</keyword>
<keyword id="KW-0843">Virulence</keyword>
<name>PLYC_DICCH</name>
<protein>
    <recommendedName>
        <fullName>Pectate lyase C</fullName>
        <ecNumber>4.2.2.2</ecNumber>
    </recommendedName>
</protein>
<accession>P11073</accession>
<proteinExistence type="evidence at protein level"/>
<organism>
    <name type="scientific">Dickeya chrysanthemi</name>
    <name type="common">Pectobacterium chrysanthemi</name>
    <name type="synonym">Erwinia chrysanthemi</name>
    <dbReference type="NCBI Taxonomy" id="556"/>
    <lineage>
        <taxon>Bacteria</taxon>
        <taxon>Pseudomonadati</taxon>
        <taxon>Pseudomonadota</taxon>
        <taxon>Gammaproteobacteria</taxon>
        <taxon>Enterobacterales</taxon>
        <taxon>Pectobacteriaceae</taxon>
        <taxon>Dickeya</taxon>
    </lineage>
</organism>